<sequence>MSTADRTAPVTVTVTGAAGQIAYGLLFRIASGAMLGPHTPIRLRLLEIPAAVASLEGVAMELEDGAFPLLDAIDISDDPWTGFAGANVALLVGARPRTAGMERADLLAANGPIFTDQGQAINAVAADDVKVLVVGNPANTNAFIAMSNAPDVPAERFTAMTRLDHNRAIAQLAKKTGAPATEIHRIAVWGNHSATQYPDLTHATVAGRPARELVDEQWLREDFIPTVQQRGTAIIQARGASSAASAASAAIDHIHDWVLGTPAGEWTSMAVPSDGSYGVPDGLISSFPVTCADGAYRIVEGLEVDAFSRERIDASVAELTAEREAVVELGFAKG</sequence>
<reference key="1">
    <citation type="journal article" date="2004" name="Proc. Natl. Acad. Sci. U.S.A.">
        <title>The complete genomic sequence of Nocardia farcinica IFM 10152.</title>
        <authorList>
            <person name="Ishikawa J."/>
            <person name="Yamashita A."/>
            <person name="Mikami Y."/>
            <person name="Hoshino Y."/>
            <person name="Kurita H."/>
            <person name="Hotta K."/>
            <person name="Shiba T."/>
            <person name="Hattori M."/>
        </authorList>
    </citation>
    <scope>NUCLEOTIDE SEQUENCE [LARGE SCALE GENOMIC DNA]</scope>
    <source>
        <strain>IFM 10152</strain>
    </source>
</reference>
<evidence type="ECO:0000255" key="1">
    <source>
        <dbReference type="HAMAP-Rule" id="MF_01517"/>
    </source>
</evidence>
<accession>Q5YTI1</accession>
<feature type="chain" id="PRO_0000113383" description="Malate dehydrogenase">
    <location>
        <begin position="1"/>
        <end position="334"/>
    </location>
</feature>
<feature type="active site" description="Proton acceptor" evidence="1">
    <location>
        <position position="192"/>
    </location>
</feature>
<feature type="binding site" evidence="1">
    <location>
        <begin position="16"/>
        <end position="22"/>
    </location>
    <ligand>
        <name>NAD(+)</name>
        <dbReference type="ChEBI" id="CHEBI:57540"/>
    </ligand>
</feature>
<feature type="binding site" evidence="1">
    <location>
        <position position="97"/>
    </location>
    <ligand>
        <name>substrate</name>
    </ligand>
</feature>
<feature type="binding site" evidence="1">
    <location>
        <position position="103"/>
    </location>
    <ligand>
        <name>substrate</name>
    </ligand>
</feature>
<feature type="binding site" evidence="1">
    <location>
        <position position="110"/>
    </location>
    <ligand>
        <name>NAD(+)</name>
        <dbReference type="ChEBI" id="CHEBI:57540"/>
    </ligand>
</feature>
<feature type="binding site" evidence="1">
    <location>
        <position position="117"/>
    </location>
    <ligand>
        <name>NAD(+)</name>
        <dbReference type="ChEBI" id="CHEBI:57540"/>
    </ligand>
</feature>
<feature type="binding site" evidence="1">
    <location>
        <begin position="134"/>
        <end position="136"/>
    </location>
    <ligand>
        <name>NAD(+)</name>
        <dbReference type="ChEBI" id="CHEBI:57540"/>
    </ligand>
</feature>
<feature type="binding site" evidence="1">
    <location>
        <position position="136"/>
    </location>
    <ligand>
        <name>substrate</name>
    </ligand>
</feature>
<feature type="binding site" evidence="1">
    <location>
        <position position="167"/>
    </location>
    <ligand>
        <name>substrate</name>
    </ligand>
</feature>
<dbReference type="EC" id="1.1.1.37" evidence="1"/>
<dbReference type="EMBL" id="AP006618">
    <property type="protein sequence ID" value="BAD58510.1"/>
    <property type="molecule type" value="Genomic_DNA"/>
</dbReference>
<dbReference type="RefSeq" id="WP_011210195.1">
    <property type="nucleotide sequence ID" value="NC_006361.1"/>
</dbReference>
<dbReference type="SMR" id="Q5YTI1"/>
<dbReference type="STRING" id="247156.NFA_36620"/>
<dbReference type="GeneID" id="61134355"/>
<dbReference type="KEGG" id="nfa:NFA_36620"/>
<dbReference type="eggNOG" id="COG0039">
    <property type="taxonomic scope" value="Bacteria"/>
</dbReference>
<dbReference type="HOGENOM" id="CLU_040727_2_0_11"/>
<dbReference type="OrthoDB" id="9802969at2"/>
<dbReference type="Proteomes" id="UP000006820">
    <property type="component" value="Chromosome"/>
</dbReference>
<dbReference type="GO" id="GO:0030060">
    <property type="term" value="F:L-malate dehydrogenase (NAD+) activity"/>
    <property type="evidence" value="ECO:0007669"/>
    <property type="project" value="UniProtKB-UniRule"/>
</dbReference>
<dbReference type="GO" id="GO:0006108">
    <property type="term" value="P:malate metabolic process"/>
    <property type="evidence" value="ECO:0007669"/>
    <property type="project" value="InterPro"/>
</dbReference>
<dbReference type="GO" id="GO:0006099">
    <property type="term" value="P:tricarboxylic acid cycle"/>
    <property type="evidence" value="ECO:0007669"/>
    <property type="project" value="UniProtKB-UniRule"/>
</dbReference>
<dbReference type="CDD" id="cd01338">
    <property type="entry name" value="MDH_chloroplast-like"/>
    <property type="match status" value="1"/>
</dbReference>
<dbReference type="FunFam" id="3.40.50.720:FF:000010">
    <property type="entry name" value="Malate dehydrogenase"/>
    <property type="match status" value="1"/>
</dbReference>
<dbReference type="FunFam" id="3.90.110.10:FF:000002">
    <property type="entry name" value="Malate dehydrogenase"/>
    <property type="match status" value="1"/>
</dbReference>
<dbReference type="Gene3D" id="3.90.110.10">
    <property type="entry name" value="Lactate dehydrogenase/glycoside hydrolase, family 4, C-terminal"/>
    <property type="match status" value="1"/>
</dbReference>
<dbReference type="Gene3D" id="3.40.50.720">
    <property type="entry name" value="NAD(P)-binding Rossmann-like Domain"/>
    <property type="match status" value="1"/>
</dbReference>
<dbReference type="HAMAP" id="MF_01517">
    <property type="entry name" value="Malate_dehydrog_2"/>
    <property type="match status" value="1"/>
</dbReference>
<dbReference type="InterPro" id="IPR001557">
    <property type="entry name" value="L-lactate/malate_DH"/>
</dbReference>
<dbReference type="InterPro" id="IPR022383">
    <property type="entry name" value="Lactate/malate_DH_C"/>
</dbReference>
<dbReference type="InterPro" id="IPR001236">
    <property type="entry name" value="Lactate/malate_DH_N"/>
</dbReference>
<dbReference type="InterPro" id="IPR015955">
    <property type="entry name" value="Lactate_DH/Glyco_Ohase_4_C"/>
</dbReference>
<dbReference type="InterPro" id="IPR001252">
    <property type="entry name" value="Malate_DH_AS"/>
</dbReference>
<dbReference type="InterPro" id="IPR010945">
    <property type="entry name" value="Malate_DH_type2"/>
</dbReference>
<dbReference type="InterPro" id="IPR036291">
    <property type="entry name" value="NAD(P)-bd_dom_sf"/>
</dbReference>
<dbReference type="NCBIfam" id="TIGR01759">
    <property type="entry name" value="MalateDH-SF1"/>
    <property type="match status" value="1"/>
</dbReference>
<dbReference type="NCBIfam" id="NF003916">
    <property type="entry name" value="PRK05442.1"/>
    <property type="match status" value="1"/>
</dbReference>
<dbReference type="PANTHER" id="PTHR23382">
    <property type="entry name" value="MALATE DEHYDROGENASE"/>
    <property type="match status" value="1"/>
</dbReference>
<dbReference type="Pfam" id="PF02866">
    <property type="entry name" value="Ldh_1_C"/>
    <property type="match status" value="1"/>
</dbReference>
<dbReference type="Pfam" id="PF00056">
    <property type="entry name" value="Ldh_1_N"/>
    <property type="match status" value="1"/>
</dbReference>
<dbReference type="PIRSF" id="PIRSF000102">
    <property type="entry name" value="Lac_mal_DH"/>
    <property type="match status" value="1"/>
</dbReference>
<dbReference type="SUPFAM" id="SSF56327">
    <property type="entry name" value="LDH C-terminal domain-like"/>
    <property type="match status" value="1"/>
</dbReference>
<dbReference type="SUPFAM" id="SSF51735">
    <property type="entry name" value="NAD(P)-binding Rossmann-fold domains"/>
    <property type="match status" value="1"/>
</dbReference>
<dbReference type="PROSITE" id="PS00068">
    <property type="entry name" value="MDH"/>
    <property type="match status" value="1"/>
</dbReference>
<name>MDH_NOCFA</name>
<protein>
    <recommendedName>
        <fullName evidence="1">Malate dehydrogenase</fullName>
        <ecNumber evidence="1">1.1.1.37</ecNumber>
    </recommendedName>
</protein>
<gene>
    <name evidence="1" type="primary">mdh</name>
    <name type="ordered locus">NFA_36620</name>
</gene>
<comment type="function">
    <text evidence="1">Catalyzes the reversible oxidation of malate to oxaloacetate.</text>
</comment>
<comment type="catalytic activity">
    <reaction evidence="1">
        <text>(S)-malate + NAD(+) = oxaloacetate + NADH + H(+)</text>
        <dbReference type="Rhea" id="RHEA:21432"/>
        <dbReference type="ChEBI" id="CHEBI:15378"/>
        <dbReference type="ChEBI" id="CHEBI:15589"/>
        <dbReference type="ChEBI" id="CHEBI:16452"/>
        <dbReference type="ChEBI" id="CHEBI:57540"/>
        <dbReference type="ChEBI" id="CHEBI:57945"/>
        <dbReference type="EC" id="1.1.1.37"/>
    </reaction>
</comment>
<comment type="similarity">
    <text evidence="1">Belongs to the LDH/MDH superfamily. MDH type 2 family.</text>
</comment>
<keyword id="KW-0520">NAD</keyword>
<keyword id="KW-0560">Oxidoreductase</keyword>
<keyword id="KW-1185">Reference proteome</keyword>
<keyword id="KW-0816">Tricarboxylic acid cycle</keyword>
<organism>
    <name type="scientific">Nocardia farcinica (strain IFM 10152)</name>
    <dbReference type="NCBI Taxonomy" id="247156"/>
    <lineage>
        <taxon>Bacteria</taxon>
        <taxon>Bacillati</taxon>
        <taxon>Actinomycetota</taxon>
        <taxon>Actinomycetes</taxon>
        <taxon>Mycobacteriales</taxon>
        <taxon>Nocardiaceae</taxon>
        <taxon>Nocardia</taxon>
    </lineage>
</organism>
<proteinExistence type="inferred from homology"/>